<name>NHLC4_MOUSE</name>
<keyword id="KW-1185">Reference proteome</keyword>
<keyword id="KW-0677">Repeat</keyword>
<gene>
    <name type="primary">Nhlrc4</name>
</gene>
<accession>Q3UP44</accession>
<protein>
    <recommendedName>
        <fullName>NHL-repeat-containing protein 4</fullName>
    </recommendedName>
</protein>
<feature type="chain" id="PRO_0000395107" description="NHL-repeat-containing protein 4">
    <location>
        <begin position="1"/>
        <end position="136"/>
    </location>
</feature>
<feature type="repeat" description="NHL 1">
    <location>
        <begin position="48"/>
        <end position="91"/>
    </location>
</feature>
<feature type="repeat" description="NHL 2">
    <location>
        <begin position="93"/>
        <end position="132"/>
    </location>
</feature>
<reference key="1">
    <citation type="journal article" date="2005" name="Science">
        <title>The transcriptional landscape of the mammalian genome.</title>
        <authorList>
            <person name="Carninci P."/>
            <person name="Kasukawa T."/>
            <person name="Katayama S."/>
            <person name="Gough J."/>
            <person name="Frith M.C."/>
            <person name="Maeda N."/>
            <person name="Oyama R."/>
            <person name="Ravasi T."/>
            <person name="Lenhard B."/>
            <person name="Wells C."/>
            <person name="Kodzius R."/>
            <person name="Shimokawa K."/>
            <person name="Bajic V.B."/>
            <person name="Brenner S.E."/>
            <person name="Batalov S."/>
            <person name="Forrest A.R."/>
            <person name="Zavolan M."/>
            <person name="Davis M.J."/>
            <person name="Wilming L.G."/>
            <person name="Aidinis V."/>
            <person name="Allen J.E."/>
            <person name="Ambesi-Impiombato A."/>
            <person name="Apweiler R."/>
            <person name="Aturaliya R.N."/>
            <person name="Bailey T.L."/>
            <person name="Bansal M."/>
            <person name="Baxter L."/>
            <person name="Beisel K.W."/>
            <person name="Bersano T."/>
            <person name="Bono H."/>
            <person name="Chalk A.M."/>
            <person name="Chiu K.P."/>
            <person name="Choudhary V."/>
            <person name="Christoffels A."/>
            <person name="Clutterbuck D.R."/>
            <person name="Crowe M.L."/>
            <person name="Dalla E."/>
            <person name="Dalrymple B.P."/>
            <person name="de Bono B."/>
            <person name="Della Gatta G."/>
            <person name="di Bernardo D."/>
            <person name="Down T."/>
            <person name="Engstrom P."/>
            <person name="Fagiolini M."/>
            <person name="Faulkner G."/>
            <person name="Fletcher C.F."/>
            <person name="Fukushima T."/>
            <person name="Furuno M."/>
            <person name="Futaki S."/>
            <person name="Gariboldi M."/>
            <person name="Georgii-Hemming P."/>
            <person name="Gingeras T.R."/>
            <person name="Gojobori T."/>
            <person name="Green R.E."/>
            <person name="Gustincich S."/>
            <person name="Harbers M."/>
            <person name="Hayashi Y."/>
            <person name="Hensch T.K."/>
            <person name="Hirokawa N."/>
            <person name="Hill D."/>
            <person name="Huminiecki L."/>
            <person name="Iacono M."/>
            <person name="Ikeo K."/>
            <person name="Iwama A."/>
            <person name="Ishikawa T."/>
            <person name="Jakt M."/>
            <person name="Kanapin A."/>
            <person name="Katoh M."/>
            <person name="Kawasawa Y."/>
            <person name="Kelso J."/>
            <person name="Kitamura H."/>
            <person name="Kitano H."/>
            <person name="Kollias G."/>
            <person name="Krishnan S.P."/>
            <person name="Kruger A."/>
            <person name="Kummerfeld S.K."/>
            <person name="Kurochkin I.V."/>
            <person name="Lareau L.F."/>
            <person name="Lazarevic D."/>
            <person name="Lipovich L."/>
            <person name="Liu J."/>
            <person name="Liuni S."/>
            <person name="McWilliam S."/>
            <person name="Madan Babu M."/>
            <person name="Madera M."/>
            <person name="Marchionni L."/>
            <person name="Matsuda H."/>
            <person name="Matsuzawa S."/>
            <person name="Miki H."/>
            <person name="Mignone F."/>
            <person name="Miyake S."/>
            <person name="Morris K."/>
            <person name="Mottagui-Tabar S."/>
            <person name="Mulder N."/>
            <person name="Nakano N."/>
            <person name="Nakauchi H."/>
            <person name="Ng P."/>
            <person name="Nilsson R."/>
            <person name="Nishiguchi S."/>
            <person name="Nishikawa S."/>
            <person name="Nori F."/>
            <person name="Ohara O."/>
            <person name="Okazaki Y."/>
            <person name="Orlando V."/>
            <person name="Pang K.C."/>
            <person name="Pavan W.J."/>
            <person name="Pavesi G."/>
            <person name="Pesole G."/>
            <person name="Petrovsky N."/>
            <person name="Piazza S."/>
            <person name="Reed J."/>
            <person name="Reid J.F."/>
            <person name="Ring B.Z."/>
            <person name="Ringwald M."/>
            <person name="Rost B."/>
            <person name="Ruan Y."/>
            <person name="Salzberg S.L."/>
            <person name="Sandelin A."/>
            <person name="Schneider C."/>
            <person name="Schoenbach C."/>
            <person name="Sekiguchi K."/>
            <person name="Semple C.A."/>
            <person name="Seno S."/>
            <person name="Sessa L."/>
            <person name="Sheng Y."/>
            <person name="Shibata Y."/>
            <person name="Shimada H."/>
            <person name="Shimada K."/>
            <person name="Silva D."/>
            <person name="Sinclair B."/>
            <person name="Sperling S."/>
            <person name="Stupka E."/>
            <person name="Sugiura K."/>
            <person name="Sultana R."/>
            <person name="Takenaka Y."/>
            <person name="Taki K."/>
            <person name="Tammoja K."/>
            <person name="Tan S.L."/>
            <person name="Tang S."/>
            <person name="Taylor M.S."/>
            <person name="Tegner J."/>
            <person name="Teichmann S.A."/>
            <person name="Ueda H.R."/>
            <person name="van Nimwegen E."/>
            <person name="Verardo R."/>
            <person name="Wei C.L."/>
            <person name="Yagi K."/>
            <person name="Yamanishi H."/>
            <person name="Zabarovsky E."/>
            <person name="Zhu S."/>
            <person name="Zimmer A."/>
            <person name="Hide W."/>
            <person name="Bult C."/>
            <person name="Grimmond S.M."/>
            <person name="Teasdale R.D."/>
            <person name="Liu E.T."/>
            <person name="Brusic V."/>
            <person name="Quackenbush J."/>
            <person name="Wahlestedt C."/>
            <person name="Mattick J.S."/>
            <person name="Hume D.A."/>
            <person name="Kai C."/>
            <person name="Sasaki D."/>
            <person name="Tomaru Y."/>
            <person name="Fukuda S."/>
            <person name="Kanamori-Katayama M."/>
            <person name="Suzuki M."/>
            <person name="Aoki J."/>
            <person name="Arakawa T."/>
            <person name="Iida J."/>
            <person name="Imamura K."/>
            <person name="Itoh M."/>
            <person name="Kato T."/>
            <person name="Kawaji H."/>
            <person name="Kawagashira N."/>
            <person name="Kawashima T."/>
            <person name="Kojima M."/>
            <person name="Kondo S."/>
            <person name="Konno H."/>
            <person name="Nakano K."/>
            <person name="Ninomiya N."/>
            <person name="Nishio T."/>
            <person name="Okada M."/>
            <person name="Plessy C."/>
            <person name="Shibata K."/>
            <person name="Shiraki T."/>
            <person name="Suzuki S."/>
            <person name="Tagami M."/>
            <person name="Waki K."/>
            <person name="Watahiki A."/>
            <person name="Okamura-Oho Y."/>
            <person name="Suzuki H."/>
            <person name="Kawai J."/>
            <person name="Hayashizaki Y."/>
        </authorList>
    </citation>
    <scope>NUCLEOTIDE SEQUENCE [LARGE SCALE MRNA]</scope>
    <source>
        <strain>C57BL/6J</strain>
        <tissue>Spleen</tissue>
    </source>
</reference>
<reference key="2">
    <citation type="journal article" date="2004" name="Genome Res.">
        <title>The status, quality, and expansion of the NIH full-length cDNA project: the Mammalian Gene Collection (MGC).</title>
        <authorList>
            <consortium name="The MGC Project Team"/>
        </authorList>
    </citation>
    <scope>NUCLEOTIDE SEQUENCE [LARGE SCALE MRNA]</scope>
    <source>
        <tissue>Brain</tissue>
    </source>
</reference>
<organism>
    <name type="scientific">Mus musculus</name>
    <name type="common">Mouse</name>
    <dbReference type="NCBI Taxonomy" id="10090"/>
    <lineage>
        <taxon>Eukaryota</taxon>
        <taxon>Metazoa</taxon>
        <taxon>Chordata</taxon>
        <taxon>Craniata</taxon>
        <taxon>Vertebrata</taxon>
        <taxon>Euteleostomi</taxon>
        <taxon>Mammalia</taxon>
        <taxon>Eutheria</taxon>
        <taxon>Euarchontoglires</taxon>
        <taxon>Glires</taxon>
        <taxon>Rodentia</taxon>
        <taxon>Myomorpha</taxon>
        <taxon>Muroidea</taxon>
        <taxon>Muridae</taxon>
        <taxon>Murinae</taxon>
        <taxon>Mus</taxon>
        <taxon>Mus</taxon>
    </lineage>
</organism>
<proteinExistence type="evidence at transcript level"/>
<sequence length="136" mass="14169">MLGPTWEPLAPTSMLGLEGPCWVGPGPDGGFAVSEEFGDVQLFGSAHQPLGSLGTLTGHNFGHPAGVCSDAEGSIIVADEQRHQVTLFPRVGPPICLQLEGLKRPLGMACAPQGQLVVADAGDNCIKLYQYLGEMA</sequence>
<dbReference type="EMBL" id="BC147284">
    <property type="protein sequence ID" value="AAI47285.1"/>
    <property type="molecule type" value="mRNA"/>
</dbReference>
<dbReference type="EMBL" id="BC147285">
    <property type="protein sequence ID" value="AAI47286.1"/>
    <property type="molecule type" value="mRNA"/>
</dbReference>
<dbReference type="EMBL" id="AK143822">
    <property type="protein sequence ID" value="BAE25553.1"/>
    <property type="molecule type" value="mRNA"/>
</dbReference>
<dbReference type="RefSeq" id="NP_001034127.1">
    <property type="nucleotide sequence ID" value="NM_001039038.2"/>
</dbReference>
<dbReference type="SMR" id="Q3UP44"/>
<dbReference type="FunCoup" id="Q3UP44">
    <property type="interactions" value="9"/>
</dbReference>
<dbReference type="PaxDb" id="10090-ENSMUSP00000082102"/>
<dbReference type="ProteomicsDB" id="293553"/>
<dbReference type="Antibodypedia" id="82190">
    <property type="antibodies" value="2 antibodies from 2 providers"/>
</dbReference>
<dbReference type="Ensembl" id="ENSMUST00000085027.4">
    <property type="protein sequence ID" value="ENSMUSP00000082102.4"/>
    <property type="gene ID" value="ENSMUSG00000090113.8"/>
</dbReference>
<dbReference type="GeneID" id="621239"/>
<dbReference type="KEGG" id="mmu:621239"/>
<dbReference type="UCSC" id="uc008bcu.1">
    <property type="organism name" value="mouse"/>
</dbReference>
<dbReference type="AGR" id="MGI:3687200"/>
<dbReference type="CTD" id="283948"/>
<dbReference type="MGI" id="MGI:3687200">
    <property type="gene designation" value="Nhlrc4"/>
</dbReference>
<dbReference type="VEuPathDB" id="HostDB:ENSMUSG00000090113"/>
<dbReference type="eggNOG" id="KOG2177">
    <property type="taxonomic scope" value="Eukaryota"/>
</dbReference>
<dbReference type="GeneTree" id="ENSGT00530000063870"/>
<dbReference type="HOGENOM" id="CLU_2014466_0_0_1"/>
<dbReference type="InParanoid" id="Q3UP44"/>
<dbReference type="OMA" id="HGAPICL"/>
<dbReference type="OrthoDB" id="10020332at2759"/>
<dbReference type="PhylomeDB" id="Q3UP44"/>
<dbReference type="BioGRID-ORCS" id="621239">
    <property type="hits" value="8 hits in 76 CRISPR screens"/>
</dbReference>
<dbReference type="PRO" id="PR:Q3UP44"/>
<dbReference type="Proteomes" id="UP000000589">
    <property type="component" value="Chromosome 17"/>
</dbReference>
<dbReference type="RNAct" id="Q3UP44">
    <property type="molecule type" value="protein"/>
</dbReference>
<dbReference type="Bgee" id="ENSMUSG00000090113">
    <property type="expression patterns" value="Expressed in bone marrow and 28 other cell types or tissues"/>
</dbReference>
<dbReference type="Gene3D" id="2.120.10.30">
    <property type="entry name" value="TolB, C-terminal domain"/>
    <property type="match status" value="1"/>
</dbReference>
<dbReference type="InterPro" id="IPR011042">
    <property type="entry name" value="6-blade_b-propeller_TolB-like"/>
</dbReference>
<dbReference type="InterPro" id="IPR001258">
    <property type="entry name" value="NHL_repeat"/>
</dbReference>
<dbReference type="PANTHER" id="PTHR25464:SF3">
    <property type="entry name" value="E3 UBIQUITIN-PROTEIN LIGASE TRIM32"/>
    <property type="match status" value="1"/>
</dbReference>
<dbReference type="PANTHER" id="PTHR25464">
    <property type="entry name" value="TRIPARTITE MOTIF-CONTAINING PROTEIN 2-LIKE PROTEIN"/>
    <property type="match status" value="1"/>
</dbReference>
<dbReference type="Pfam" id="PF01436">
    <property type="entry name" value="NHL"/>
    <property type="match status" value="1"/>
</dbReference>
<dbReference type="SUPFAM" id="SSF63829">
    <property type="entry name" value="Calcium-dependent phosphotriesterase"/>
    <property type="match status" value="1"/>
</dbReference>
<dbReference type="PROSITE" id="PS51125">
    <property type="entry name" value="NHL"/>
    <property type="match status" value="2"/>
</dbReference>